<gene>
    <name type="primary">yteR</name>
    <name type="ordered locus">BSU30120</name>
</gene>
<reference key="1">
    <citation type="journal article" date="1997" name="Microbiology">
        <title>Sequencing and functional annotation of the Bacillus subtilis genes in the 200 kb rrnB-dnaB region.</title>
        <authorList>
            <person name="Lapidus A."/>
            <person name="Galleron N."/>
            <person name="Sorokin A."/>
            <person name="Ehrlich S.D."/>
        </authorList>
    </citation>
    <scope>NUCLEOTIDE SEQUENCE [GENOMIC DNA]</scope>
    <source>
        <strain>168</strain>
    </source>
</reference>
<reference key="2">
    <citation type="journal article" date="1997" name="Nature">
        <title>The complete genome sequence of the Gram-positive bacterium Bacillus subtilis.</title>
        <authorList>
            <person name="Kunst F."/>
            <person name="Ogasawara N."/>
            <person name="Moszer I."/>
            <person name="Albertini A.M."/>
            <person name="Alloni G."/>
            <person name="Azevedo V."/>
            <person name="Bertero M.G."/>
            <person name="Bessieres P."/>
            <person name="Bolotin A."/>
            <person name="Borchert S."/>
            <person name="Borriss R."/>
            <person name="Boursier L."/>
            <person name="Brans A."/>
            <person name="Braun M."/>
            <person name="Brignell S.C."/>
            <person name="Bron S."/>
            <person name="Brouillet S."/>
            <person name="Bruschi C.V."/>
            <person name="Caldwell B."/>
            <person name="Capuano V."/>
            <person name="Carter N.M."/>
            <person name="Choi S.-K."/>
            <person name="Codani J.-J."/>
            <person name="Connerton I.F."/>
            <person name="Cummings N.J."/>
            <person name="Daniel R.A."/>
            <person name="Denizot F."/>
            <person name="Devine K.M."/>
            <person name="Duesterhoeft A."/>
            <person name="Ehrlich S.D."/>
            <person name="Emmerson P.T."/>
            <person name="Entian K.-D."/>
            <person name="Errington J."/>
            <person name="Fabret C."/>
            <person name="Ferrari E."/>
            <person name="Foulger D."/>
            <person name="Fritz C."/>
            <person name="Fujita M."/>
            <person name="Fujita Y."/>
            <person name="Fuma S."/>
            <person name="Galizzi A."/>
            <person name="Galleron N."/>
            <person name="Ghim S.-Y."/>
            <person name="Glaser P."/>
            <person name="Goffeau A."/>
            <person name="Golightly E.J."/>
            <person name="Grandi G."/>
            <person name="Guiseppi G."/>
            <person name="Guy B.J."/>
            <person name="Haga K."/>
            <person name="Haiech J."/>
            <person name="Harwood C.R."/>
            <person name="Henaut A."/>
            <person name="Hilbert H."/>
            <person name="Holsappel S."/>
            <person name="Hosono S."/>
            <person name="Hullo M.-F."/>
            <person name="Itaya M."/>
            <person name="Jones L.-M."/>
            <person name="Joris B."/>
            <person name="Karamata D."/>
            <person name="Kasahara Y."/>
            <person name="Klaerr-Blanchard M."/>
            <person name="Klein C."/>
            <person name="Kobayashi Y."/>
            <person name="Koetter P."/>
            <person name="Koningstein G."/>
            <person name="Krogh S."/>
            <person name="Kumano M."/>
            <person name="Kurita K."/>
            <person name="Lapidus A."/>
            <person name="Lardinois S."/>
            <person name="Lauber J."/>
            <person name="Lazarevic V."/>
            <person name="Lee S.-M."/>
            <person name="Levine A."/>
            <person name="Liu H."/>
            <person name="Masuda S."/>
            <person name="Mauel C."/>
            <person name="Medigue C."/>
            <person name="Medina N."/>
            <person name="Mellado R.P."/>
            <person name="Mizuno M."/>
            <person name="Moestl D."/>
            <person name="Nakai S."/>
            <person name="Noback M."/>
            <person name="Noone D."/>
            <person name="O'Reilly M."/>
            <person name="Ogawa K."/>
            <person name="Ogiwara A."/>
            <person name="Oudega B."/>
            <person name="Park S.-H."/>
            <person name="Parro V."/>
            <person name="Pohl T.M."/>
            <person name="Portetelle D."/>
            <person name="Porwollik S."/>
            <person name="Prescott A.M."/>
            <person name="Presecan E."/>
            <person name="Pujic P."/>
            <person name="Purnelle B."/>
            <person name="Rapoport G."/>
            <person name="Rey M."/>
            <person name="Reynolds S."/>
            <person name="Rieger M."/>
            <person name="Rivolta C."/>
            <person name="Rocha E."/>
            <person name="Roche B."/>
            <person name="Rose M."/>
            <person name="Sadaie Y."/>
            <person name="Sato T."/>
            <person name="Scanlan E."/>
            <person name="Schleich S."/>
            <person name="Schroeter R."/>
            <person name="Scoffone F."/>
            <person name="Sekiguchi J."/>
            <person name="Sekowska A."/>
            <person name="Seror S.J."/>
            <person name="Serror P."/>
            <person name="Shin B.-S."/>
            <person name="Soldo B."/>
            <person name="Sorokin A."/>
            <person name="Tacconi E."/>
            <person name="Takagi T."/>
            <person name="Takahashi H."/>
            <person name="Takemaru K."/>
            <person name="Takeuchi M."/>
            <person name="Tamakoshi A."/>
            <person name="Tanaka T."/>
            <person name="Terpstra P."/>
            <person name="Tognoni A."/>
            <person name="Tosato V."/>
            <person name="Uchiyama S."/>
            <person name="Vandenbol M."/>
            <person name="Vannier F."/>
            <person name="Vassarotti A."/>
            <person name="Viari A."/>
            <person name="Wambutt R."/>
            <person name="Wedler E."/>
            <person name="Wedler H."/>
            <person name="Weitzenegger T."/>
            <person name="Winters P."/>
            <person name="Wipat A."/>
            <person name="Yamamoto H."/>
            <person name="Yamane K."/>
            <person name="Yasumoto K."/>
            <person name="Yata K."/>
            <person name="Yoshida K."/>
            <person name="Yoshikawa H.-F."/>
            <person name="Zumstein E."/>
            <person name="Yoshikawa H."/>
            <person name="Danchin A."/>
        </authorList>
    </citation>
    <scope>NUCLEOTIDE SEQUENCE [LARGE SCALE GENOMIC DNA]</scope>
    <source>
        <strain>168</strain>
    </source>
</reference>
<reference key="3">
    <citation type="journal article" date="2006" name="J. Mol. Biol.">
        <title>A novel glycoside hydrolase family 105: the structure of family 105 unsaturated rhamnogalacturonyl hydrolase complexed with a disaccharide in comparison with family 88 enzyme complexed with the disaccharide.</title>
        <authorList>
            <person name="Itoh T."/>
            <person name="Ochiai A."/>
            <person name="Mikami B."/>
            <person name="Hashimoto W."/>
            <person name="Murata K."/>
        </authorList>
    </citation>
    <scope>PROTEIN SEQUENCE OF 2-6</scope>
    <scope>X-RAY CRYSTALLOGRAPHY (1.7 ANGSTROMS) IN COMPLEX WITH SUBSTRATE ANALOGS</scope>
    <scope>FUNCTION</scope>
    <scope>MUTAGENESIS OF ASP-143</scope>
    <scope>REACTION MECHANISM</scope>
    <scope>BIOPHYSICOCHEMICAL PROPERTIES</scope>
    <scope>SUBUNIT</scope>
</reference>
<reference key="4">
    <citation type="journal article" date="2005" name="Proteins">
        <title>1.6 A crystal structure of YteR protein from Bacillus subtilis, a predicted lyase.</title>
        <authorList>
            <person name="Zhang R."/>
            <person name="Minh T."/>
            <person name="Lezondra L."/>
            <person name="Korolev S."/>
            <person name="Moy S.F."/>
            <person name="Collart F."/>
            <person name="Joachimiak A."/>
        </authorList>
    </citation>
    <scope>X-RAY CRYSTALLOGRAPHY (1.6 ANGSTROMS)</scope>
</reference>
<reference key="5">
    <citation type="journal article" date="2006" name="Biochem. Biophys. Res. Commun.">
        <title>Structure of unsaturated rhamnogalacturonyl hydrolase complexed with substrate.</title>
        <authorList>
            <person name="Itoh T."/>
            <person name="Ochiai A."/>
            <person name="Mikami B."/>
            <person name="Hashimoto W."/>
            <person name="Murata K."/>
        </authorList>
    </citation>
    <scope>X-RAY CRYSTALLOGRAPHY (1.9 ANGSTROMS) OF 11-373 OF MUTANT ASN-143 IN COMPLEX WITH SUBSTRATE ANALOGS</scope>
    <scope>ACTIVE SITE</scope>
    <scope>MUTAGENESIS OF ASP-143</scope>
    <scope>SUBSTRATE SPECIFICITY</scope>
</reference>
<accession>O34559</accession>
<accession>Q795R4</accession>
<name>URHG2_BACSU</name>
<comment type="function">
    <text evidence="1">Catalyzes the hydrolysis of unsaturated rhamnogalacturonan disaccharide to yield unsaturated D-galacturonic acid and L-rhamnose. It cannot act on unsaturated glucuronyl hydrolase (UGL) substrates containing unsaturated D-glucuronic acid at the non-reducing terminus, although the active pockets of YesR and UGL are very similar.</text>
</comment>
<comment type="catalytic activity">
    <reaction>
        <text>2-O-(4-deoxy-beta-L-threo-hex-4-enopyranuronosyl)-alpha-L-rhamnose + H2O = 5-dehydro-4-deoxy-D-glucuronate + L-rhamnopyranose</text>
        <dbReference type="Rhea" id="RHEA:30927"/>
        <dbReference type="ChEBI" id="CHEBI:15377"/>
        <dbReference type="ChEBI" id="CHEBI:17117"/>
        <dbReference type="ChEBI" id="CHEBI:62346"/>
        <dbReference type="ChEBI" id="CHEBI:62478"/>
        <dbReference type="EC" id="3.2.1.172"/>
    </reaction>
</comment>
<comment type="biophysicochemical properties">
    <kinetics>
        <KM evidence="1">100 uM for unsaturated rhamnogalacturonan disaccharide (at pH 4 and 30 degrees Celsius)</KM>
    </kinetics>
    <phDependence>
        <text evidence="1">Optimum pH is 4.0.</text>
    </phDependence>
    <temperatureDependence>
        <text evidence="1">Optimum temperature is 50 degrees Celsius. It is stable below 50 degrees Celsius.</text>
    </temperatureDependence>
</comment>
<comment type="subunit">
    <text evidence="1 2">Monomer.</text>
</comment>
<comment type="subcellular location">
    <subcellularLocation>
        <location>Cytoplasm</location>
    </subcellularLocation>
</comment>
<comment type="similarity">
    <text evidence="3">Belongs to the glycosyl hydrolase 105 family.</text>
</comment>
<proteinExistence type="evidence at protein level"/>
<organism>
    <name type="scientific">Bacillus subtilis (strain 168)</name>
    <dbReference type="NCBI Taxonomy" id="224308"/>
    <lineage>
        <taxon>Bacteria</taxon>
        <taxon>Bacillati</taxon>
        <taxon>Bacillota</taxon>
        <taxon>Bacilli</taxon>
        <taxon>Bacillales</taxon>
        <taxon>Bacillaceae</taxon>
        <taxon>Bacillus</taxon>
    </lineage>
</organism>
<evidence type="ECO:0000269" key="1">
    <source>
    </source>
</evidence>
<evidence type="ECO:0000269" key="2">
    <source>
    </source>
</evidence>
<evidence type="ECO:0000305" key="3"/>
<evidence type="ECO:0007829" key="4">
    <source>
        <dbReference type="PDB" id="1NC5"/>
    </source>
</evidence>
<dbReference type="EC" id="3.2.1.172"/>
<dbReference type="EMBL" id="AF008220">
    <property type="protein sequence ID" value="AAC00272.1"/>
    <property type="molecule type" value="Genomic_DNA"/>
</dbReference>
<dbReference type="EMBL" id="AL009126">
    <property type="protein sequence ID" value="CAB14990.3"/>
    <property type="molecule type" value="Genomic_DNA"/>
</dbReference>
<dbReference type="PIR" id="A69991">
    <property type="entry name" value="A69991"/>
</dbReference>
<dbReference type="RefSeq" id="NP_390890.2">
    <property type="nucleotide sequence ID" value="NC_000964.3"/>
</dbReference>
<dbReference type="PDB" id="1NC5">
    <property type="method" value="X-ray"/>
    <property type="resolution" value="1.60 A"/>
    <property type="chains" value="A=1-373"/>
</dbReference>
<dbReference type="PDB" id="2D8L">
    <property type="method" value="X-ray"/>
    <property type="resolution" value="1.70 A"/>
    <property type="chains" value="A=1-373"/>
</dbReference>
<dbReference type="PDB" id="2GH4">
    <property type="method" value="X-ray"/>
    <property type="resolution" value="1.90 A"/>
    <property type="chains" value="A=11-373"/>
</dbReference>
<dbReference type="PDBsum" id="1NC5"/>
<dbReference type="PDBsum" id="2D8L"/>
<dbReference type="PDBsum" id="2GH4"/>
<dbReference type="SMR" id="O34559"/>
<dbReference type="FunCoup" id="O34559">
    <property type="interactions" value="140"/>
</dbReference>
<dbReference type="STRING" id="224308.BSU30120"/>
<dbReference type="CAZy" id="GH105">
    <property type="family name" value="Glycoside Hydrolase Family 105"/>
</dbReference>
<dbReference type="PaxDb" id="224308-BSU30120"/>
<dbReference type="EnsemblBacteria" id="CAB14990">
    <property type="protein sequence ID" value="CAB14990"/>
    <property type="gene ID" value="BSU_30120"/>
</dbReference>
<dbReference type="GeneID" id="937273"/>
<dbReference type="KEGG" id="bsu:BSU30120"/>
<dbReference type="eggNOG" id="COG4225">
    <property type="taxonomic scope" value="Bacteria"/>
</dbReference>
<dbReference type="InParanoid" id="O34559"/>
<dbReference type="OrthoDB" id="6381507at2"/>
<dbReference type="BioCyc" id="BSUB:BSU30120-MONOMER"/>
<dbReference type="BRENDA" id="3.2.1.172">
    <property type="organism ID" value="658"/>
</dbReference>
<dbReference type="EvolutionaryTrace" id="O34559"/>
<dbReference type="Proteomes" id="UP000001570">
    <property type="component" value="Chromosome"/>
</dbReference>
<dbReference type="GO" id="GO:0005737">
    <property type="term" value="C:cytoplasm"/>
    <property type="evidence" value="ECO:0007669"/>
    <property type="project" value="UniProtKB-SubCell"/>
</dbReference>
<dbReference type="GO" id="GO:0102211">
    <property type="term" value="F:unsaturated rhamnogalacturonyl hydrolase activity"/>
    <property type="evidence" value="ECO:0007669"/>
    <property type="project" value="UniProtKB-EC"/>
</dbReference>
<dbReference type="GO" id="GO:0005975">
    <property type="term" value="P:carbohydrate metabolic process"/>
    <property type="evidence" value="ECO:0007669"/>
    <property type="project" value="InterPro"/>
</dbReference>
<dbReference type="Gene3D" id="1.50.10.10">
    <property type="match status" value="1"/>
</dbReference>
<dbReference type="InterPro" id="IPR008928">
    <property type="entry name" value="6-hairpin_glycosidase_sf"/>
</dbReference>
<dbReference type="InterPro" id="IPR012341">
    <property type="entry name" value="6hp_glycosidase-like_sf"/>
</dbReference>
<dbReference type="InterPro" id="IPR010905">
    <property type="entry name" value="Glyco_hydro_88"/>
</dbReference>
<dbReference type="InterPro" id="IPR052043">
    <property type="entry name" value="PolySaccharide_Degr_Enz"/>
</dbReference>
<dbReference type="PANTHER" id="PTHR33886">
    <property type="entry name" value="UNSATURATED RHAMNOGALACTURONAN HYDROLASE (EUROFUNG)"/>
    <property type="match status" value="1"/>
</dbReference>
<dbReference type="PANTHER" id="PTHR33886:SF8">
    <property type="entry name" value="UNSATURATED RHAMNOGALACTURONAN HYDROLASE (EUROFUNG)"/>
    <property type="match status" value="1"/>
</dbReference>
<dbReference type="Pfam" id="PF07470">
    <property type="entry name" value="Glyco_hydro_88"/>
    <property type="match status" value="1"/>
</dbReference>
<dbReference type="SUPFAM" id="SSF48208">
    <property type="entry name" value="Six-hairpin glycosidases"/>
    <property type="match status" value="1"/>
</dbReference>
<keyword id="KW-0002">3D-structure</keyword>
<keyword id="KW-0963">Cytoplasm</keyword>
<keyword id="KW-0903">Direct protein sequencing</keyword>
<keyword id="KW-0326">Glycosidase</keyword>
<keyword id="KW-0378">Hydrolase</keyword>
<keyword id="KW-1185">Reference proteome</keyword>
<feature type="initiator methionine" description="Removed" evidence="1">
    <location>
        <position position="1"/>
    </location>
</feature>
<feature type="chain" id="PRO_0000171597" description="Unsaturated rhamnogalacturonyl hydrolase YteR">
    <location>
        <begin position="2"/>
        <end position="373"/>
    </location>
</feature>
<feature type="active site" description="Proton donor" evidence="2">
    <location>
        <position position="143"/>
    </location>
</feature>
<feature type="binding site">
    <location>
        <begin position="40"/>
        <end position="41"/>
    </location>
    <ligand>
        <name>substrate</name>
    </ligand>
</feature>
<feature type="binding site">
    <location>
        <position position="88"/>
    </location>
    <ligand>
        <name>substrate</name>
    </ligand>
</feature>
<feature type="binding site">
    <location>
        <begin position="132"/>
        <end position="136"/>
    </location>
    <ligand>
        <name>substrate</name>
    </ligand>
</feature>
<feature type="binding site">
    <location>
        <begin position="213"/>
        <end position="217"/>
    </location>
    <ligand>
        <name>substrate</name>
    </ligand>
</feature>
<feature type="binding site">
    <location>
        <begin position="333"/>
        <end position="334"/>
    </location>
    <ligand>
        <name>substrate</name>
    </ligand>
</feature>
<feature type="site" description="May be essential to modulate pKa of the D-143 carboxyl group">
    <location>
        <position position="41"/>
    </location>
</feature>
<feature type="site" description="May be essential to modulate pKa of the D-143 carboxyl group">
    <location>
        <position position="88"/>
    </location>
</feature>
<feature type="mutagenesis site" description="Loss of hydrolase activity." evidence="1 2">
    <original>D</original>
    <variation>N</variation>
    <location>
        <position position="143"/>
    </location>
</feature>
<feature type="helix" evidence="4">
    <location>
        <begin position="13"/>
        <end position="27"/>
    </location>
</feature>
<feature type="turn" evidence="4">
    <location>
        <begin position="30"/>
        <end position="32"/>
    </location>
</feature>
<feature type="strand" evidence="4">
    <location>
        <begin position="33"/>
        <end position="35"/>
    </location>
</feature>
<feature type="helix" evidence="4">
    <location>
        <begin position="41"/>
        <end position="57"/>
    </location>
</feature>
<feature type="helix" evidence="4">
    <location>
        <begin position="60"/>
        <end position="73"/>
    </location>
</feature>
<feature type="helix" evidence="4">
    <location>
        <begin position="87"/>
        <end position="89"/>
    </location>
</feature>
<feature type="helix" evidence="4">
    <location>
        <begin position="91"/>
        <end position="95"/>
    </location>
</feature>
<feature type="helix" evidence="4">
    <location>
        <begin position="96"/>
        <end position="103"/>
    </location>
</feature>
<feature type="helix" evidence="4">
    <location>
        <begin position="106"/>
        <end position="116"/>
    </location>
</feature>
<feature type="helix" evidence="4">
    <location>
        <begin position="117"/>
        <end position="120"/>
    </location>
</feature>
<feature type="strand" evidence="4">
    <location>
        <begin position="139"/>
        <end position="141"/>
    </location>
</feature>
<feature type="helix" evidence="4">
    <location>
        <begin position="143"/>
        <end position="159"/>
    </location>
</feature>
<feature type="helix" evidence="4">
    <location>
        <begin position="163"/>
        <end position="179"/>
    </location>
</feature>
<feature type="turn" evidence="4">
    <location>
        <begin position="182"/>
        <end position="184"/>
    </location>
</feature>
<feature type="strand" evidence="4">
    <location>
        <begin position="189"/>
        <end position="192"/>
    </location>
</feature>
<feature type="turn" evidence="4">
    <location>
        <begin position="202"/>
        <end position="204"/>
    </location>
</feature>
<feature type="helix" evidence="4">
    <location>
        <begin position="212"/>
        <end position="225"/>
    </location>
</feature>
<feature type="helix" evidence="4">
    <location>
        <begin position="226"/>
        <end position="228"/>
    </location>
</feature>
<feature type="helix" evidence="4">
    <location>
        <begin position="235"/>
        <end position="251"/>
    </location>
</feature>
<feature type="turn" evidence="4">
    <location>
        <begin position="256"/>
        <end position="258"/>
    </location>
</feature>
<feature type="strand" evidence="4">
    <location>
        <begin position="262"/>
        <end position="264"/>
    </location>
</feature>
<feature type="helix" evidence="4">
    <location>
        <begin position="277"/>
        <end position="292"/>
    </location>
</feature>
<feature type="helix" evidence="4">
    <location>
        <begin position="298"/>
        <end position="300"/>
    </location>
</feature>
<feature type="helix" evidence="4">
    <location>
        <begin position="301"/>
        <end position="315"/>
    </location>
</feature>
<feature type="strand" evidence="4">
    <location>
        <begin position="316"/>
        <end position="318"/>
    </location>
</feature>
<feature type="strand" evidence="4">
    <location>
        <begin position="324"/>
        <end position="326"/>
    </location>
</feature>
<feature type="helix" evidence="4">
    <location>
        <begin position="338"/>
        <end position="342"/>
    </location>
</feature>
<feature type="strand" evidence="4">
    <location>
        <begin position="346"/>
        <end position="349"/>
    </location>
</feature>
<feature type="helix" evidence="4">
    <location>
        <begin position="351"/>
        <end position="370"/>
    </location>
</feature>
<sequence length="373" mass="42969">MGSMDQSIAVKSPLTYAEALANTIMNTYTVEELPPANRWHYHQGVFLCGVLRLWEATGEKRYFEYAKAYADLLIDDNGNLLFRRDELDAIQAGLILFPLYEQTKDERYVKAAKRLRSLYGTLNRTSEGGFWHKDGYPYQMWLDGLYMGGPFALKYANLKQETELFDQVVLQESLMRKHTKDAKTGLFYHAWDEAKKMPWANEETGCSPEFWARSIGWYVMSLADMIEELPKKHPNRHVWKNTLQDMIKSICRYQDKETGLWYQIVDKGDRSDNWLESSGSCLYMYAIAKGINKGYLDRAYETTLLKAYQGLIQHKTETSEDGAFLVKDICVGTSAGFYDYYVSRERSTNDLHGAGAFILAMTELEPLFRSAGK</sequence>
<protein>
    <recommendedName>
        <fullName>Unsaturated rhamnogalacturonyl hydrolase YteR</fullName>
        <shortName>URH</shortName>
        <ecNumber>3.2.1.172</ecNumber>
    </recommendedName>
</protein>